<protein>
    <recommendedName>
        <fullName>Uncharacterized protein y4gI</fullName>
    </recommendedName>
</protein>
<name>Y4GI_SINFN</name>
<organism>
    <name type="scientific">Sinorhizobium fredii (strain NBRC 101917 / NGR234)</name>
    <dbReference type="NCBI Taxonomy" id="394"/>
    <lineage>
        <taxon>Bacteria</taxon>
        <taxon>Pseudomonadati</taxon>
        <taxon>Pseudomonadota</taxon>
        <taxon>Alphaproteobacteria</taxon>
        <taxon>Hyphomicrobiales</taxon>
        <taxon>Rhizobiaceae</taxon>
        <taxon>Sinorhizobium/Ensifer group</taxon>
        <taxon>Sinorhizobium</taxon>
    </lineage>
</organism>
<sequence>MKRRVIKMATRASDMHLLNVPLSQPHFFDPHSAWLRHGPFGMWLVHALRPRRIVELGTHYGFSYFCFCQAVAAGDLATECFAVDTWQGDEHAGFYGEEIYHRVMAHNQQYVRFSRLLRKTFTEALDDIEDSSVDLLHVDGRHFYHDVKADFENWIPKLSPRSVVLFHDTEVREHGFGVWQYWAELAAIRPSLNFPYQHGLGMLFWGKEIAEGLAPLARTLTDTERLNWPVEYFALAGESYVRDATQRGVIKRLELAEATIEERKAETVLVQQKLQEARRRPLKQLKRKLVFNMLRAAAKASPPLPSRTAERFRRSAAKRDPMRDDLQTLSGQGFMTYEAVVRGWGKQRQALAGRLSELVRRLQNGPLISVVVPVYNPDPALLVEMIESVRAQSYANWELCLADDCSTDPEVGRVLRNYAAQDPRVRVVFREANGHMSQASNSAIEIARGAYIALLDHDDLLDPDALVLVVQVIDAHPDAKIIYTDEDKIVEGGTRCDAHFKPDWNRDLLYGINYISHLGVFDAALVREVGAFREGFEGAQDYDMLLRCIERVQDRQIHHIAKVLYSWRATPGSAAASNRAKPYANEAGRRALEEHLARTTGKSIPVVLGPIPFSYRALWPMEGTPLVSIIIPTRDHLNVLRATVESILGRTMYGNFELIVVDNGSVEADTLEWFGQIEGSDRRVRVLRDARPFNYSALNNAAVAQSRGEIVALVNDDVEVIAPDWLSEMVALAQRPGVGCVGAKLYYPDGRIQHAGVVIGLGGVAGHGHLLYPGEHAGYFCRLKLRQNYSAVTAACLVIKREIFDAVGGLNESELTVAFSDIDLCLKVRAAGYNNVWTPWAELYHHESASRGHEDTPEKRARFRREVDYMKRRWKTHDFADPAYNPNLALERNDFVLSSPRWCISTKLT</sequence>
<reference key="1">
    <citation type="journal article" date="1997" name="Nature">
        <title>Molecular basis of symbiosis between Rhizobium and legumes.</title>
        <authorList>
            <person name="Freiberg C.A."/>
            <person name="Fellay R."/>
            <person name="Bairoch A."/>
            <person name="Broughton W.J."/>
            <person name="Rosenthal A."/>
            <person name="Perret X."/>
        </authorList>
    </citation>
    <scope>NUCLEOTIDE SEQUENCE [LARGE SCALE GENOMIC DNA]</scope>
    <source>
        <strain>NBRC 101917 / NGR234</strain>
    </source>
</reference>
<reference key="2">
    <citation type="journal article" date="2009" name="Appl. Environ. Microbiol.">
        <title>Rhizobium sp. strain NGR234 possesses a remarkable number of secretion systems.</title>
        <authorList>
            <person name="Schmeisser C."/>
            <person name="Liesegang H."/>
            <person name="Krysciak D."/>
            <person name="Bakkou N."/>
            <person name="Le Quere A."/>
            <person name="Wollherr A."/>
            <person name="Heinemeyer I."/>
            <person name="Morgenstern B."/>
            <person name="Pommerening-Roeser A."/>
            <person name="Flores M."/>
            <person name="Palacios R."/>
            <person name="Brenner S."/>
            <person name="Gottschalk G."/>
            <person name="Schmitz R.A."/>
            <person name="Broughton W.J."/>
            <person name="Perret X."/>
            <person name="Strittmatter A.W."/>
            <person name="Streit W.R."/>
        </authorList>
    </citation>
    <scope>NUCLEOTIDE SEQUENCE [LARGE SCALE GENOMIC DNA]</scope>
    <source>
        <strain>NBRC 101917 / NGR234</strain>
    </source>
</reference>
<geneLocation type="plasmid">
    <name>sym pNGR234a</name>
</geneLocation>
<keyword id="KW-0614">Plasmid</keyword>
<keyword id="KW-1185">Reference proteome</keyword>
<accession>P55465</accession>
<dbReference type="EMBL" id="U00090">
    <property type="protein sequence ID" value="AAB91683.1"/>
    <property type="molecule type" value="Genomic_DNA"/>
</dbReference>
<dbReference type="RefSeq" id="NP_443871.1">
    <property type="nucleotide sequence ID" value="NC_000914.2"/>
</dbReference>
<dbReference type="SMR" id="P55465"/>
<dbReference type="CAZy" id="GT2">
    <property type="family name" value="Glycosyltransferase Family 2"/>
</dbReference>
<dbReference type="KEGG" id="rhi:NGR_a03550"/>
<dbReference type="PATRIC" id="fig|394.7.peg.363"/>
<dbReference type="eggNOG" id="COG0438">
    <property type="taxonomic scope" value="Bacteria"/>
</dbReference>
<dbReference type="eggNOG" id="COG1216">
    <property type="taxonomic scope" value="Bacteria"/>
</dbReference>
<dbReference type="HOGENOM" id="CLU_005003_1_0_5"/>
<dbReference type="OrthoDB" id="9783791at2"/>
<dbReference type="Proteomes" id="UP000001054">
    <property type="component" value="Plasmid pNGR234a"/>
</dbReference>
<dbReference type="GO" id="GO:0044010">
    <property type="term" value="P:single-species biofilm formation"/>
    <property type="evidence" value="ECO:0007669"/>
    <property type="project" value="TreeGrafter"/>
</dbReference>
<dbReference type="CDD" id="cd04184">
    <property type="entry name" value="GT2_RfbC_Mx_like"/>
    <property type="match status" value="1"/>
</dbReference>
<dbReference type="CDD" id="cd04186">
    <property type="entry name" value="GT_2_like_c"/>
    <property type="match status" value="1"/>
</dbReference>
<dbReference type="Gene3D" id="3.90.550.10">
    <property type="entry name" value="Spore Coat Polysaccharide Biosynthesis Protein SpsA, Chain A"/>
    <property type="match status" value="2"/>
</dbReference>
<dbReference type="Gene3D" id="3.40.50.150">
    <property type="entry name" value="Vaccinia Virus protein VP39"/>
    <property type="match status" value="1"/>
</dbReference>
<dbReference type="InterPro" id="IPR001173">
    <property type="entry name" value="Glyco_trans_2-like"/>
</dbReference>
<dbReference type="InterPro" id="IPR050834">
    <property type="entry name" value="Glycosyltransf_2"/>
</dbReference>
<dbReference type="InterPro" id="IPR029044">
    <property type="entry name" value="Nucleotide-diphossugar_trans"/>
</dbReference>
<dbReference type="InterPro" id="IPR029063">
    <property type="entry name" value="SAM-dependent_MTases_sf"/>
</dbReference>
<dbReference type="PANTHER" id="PTHR43685">
    <property type="entry name" value="GLYCOSYLTRANSFERASE"/>
    <property type="match status" value="1"/>
</dbReference>
<dbReference type="PANTHER" id="PTHR43685:SF2">
    <property type="entry name" value="GLYCOSYLTRANSFERASE 2-LIKE DOMAIN-CONTAINING PROTEIN"/>
    <property type="match status" value="1"/>
</dbReference>
<dbReference type="Pfam" id="PF00535">
    <property type="entry name" value="Glycos_transf_2"/>
    <property type="match status" value="2"/>
</dbReference>
<dbReference type="Pfam" id="PF13578">
    <property type="entry name" value="Methyltransf_24"/>
    <property type="match status" value="1"/>
</dbReference>
<dbReference type="SUPFAM" id="SSF53448">
    <property type="entry name" value="Nucleotide-diphospho-sugar transferases"/>
    <property type="match status" value="2"/>
</dbReference>
<dbReference type="SUPFAM" id="SSF53335">
    <property type="entry name" value="S-adenosyl-L-methionine-dependent methyltransferases"/>
    <property type="match status" value="1"/>
</dbReference>
<feature type="chain" id="PRO_0000200846" description="Uncharacterized protein y4gI">
    <location>
        <begin position="1"/>
        <end position="909"/>
    </location>
</feature>
<gene>
    <name type="ordered locus">NGR_a03550</name>
    <name type="ORF">y4gI</name>
</gene>
<proteinExistence type="predicted"/>